<protein>
    <recommendedName>
        <fullName evidence="1">Small ribosomal subunit protein uS19</fullName>
    </recommendedName>
    <alternativeName>
        <fullName evidence="3">30S ribosomal protein S19</fullName>
    </alternativeName>
    <alternativeName>
        <fullName>RRP-S19</fullName>
    </alternativeName>
</protein>
<organism>
    <name type="scientific">Rhodopseudomonas palustris (strain ATCC BAA-98 / CGA009)</name>
    <dbReference type="NCBI Taxonomy" id="258594"/>
    <lineage>
        <taxon>Bacteria</taxon>
        <taxon>Pseudomonadati</taxon>
        <taxon>Pseudomonadota</taxon>
        <taxon>Alphaproteobacteria</taxon>
        <taxon>Hyphomicrobiales</taxon>
        <taxon>Nitrobacteraceae</taxon>
        <taxon>Rhodopseudomonas</taxon>
    </lineage>
</organism>
<dbReference type="EMBL" id="BX572603">
    <property type="protein sequence ID" value="CAE28687.1"/>
    <property type="molecule type" value="Genomic_DNA"/>
</dbReference>
<dbReference type="RefSeq" id="WP_011158791.1">
    <property type="nucleotide sequence ID" value="NZ_CP116810.1"/>
</dbReference>
<dbReference type="SMR" id="Q6N4T8"/>
<dbReference type="IntAct" id="Q6N4T8">
    <property type="interactions" value="1"/>
</dbReference>
<dbReference type="STRING" id="258594.RPA3246"/>
<dbReference type="GeneID" id="66894332"/>
<dbReference type="eggNOG" id="COG0185">
    <property type="taxonomic scope" value="Bacteria"/>
</dbReference>
<dbReference type="HOGENOM" id="CLU_144911_0_1_5"/>
<dbReference type="PhylomeDB" id="Q6N4T8"/>
<dbReference type="GO" id="GO:0005737">
    <property type="term" value="C:cytoplasm"/>
    <property type="evidence" value="ECO:0007669"/>
    <property type="project" value="UniProtKB-ARBA"/>
</dbReference>
<dbReference type="GO" id="GO:0015935">
    <property type="term" value="C:small ribosomal subunit"/>
    <property type="evidence" value="ECO:0007669"/>
    <property type="project" value="InterPro"/>
</dbReference>
<dbReference type="GO" id="GO:0019843">
    <property type="term" value="F:rRNA binding"/>
    <property type="evidence" value="ECO:0007669"/>
    <property type="project" value="UniProtKB-UniRule"/>
</dbReference>
<dbReference type="GO" id="GO:0003735">
    <property type="term" value="F:structural constituent of ribosome"/>
    <property type="evidence" value="ECO:0007669"/>
    <property type="project" value="InterPro"/>
</dbReference>
<dbReference type="GO" id="GO:0000028">
    <property type="term" value="P:ribosomal small subunit assembly"/>
    <property type="evidence" value="ECO:0007669"/>
    <property type="project" value="TreeGrafter"/>
</dbReference>
<dbReference type="GO" id="GO:0006412">
    <property type="term" value="P:translation"/>
    <property type="evidence" value="ECO:0007669"/>
    <property type="project" value="UniProtKB-UniRule"/>
</dbReference>
<dbReference type="FunFam" id="3.30.860.10:FF:000001">
    <property type="entry name" value="30S ribosomal protein S19"/>
    <property type="match status" value="1"/>
</dbReference>
<dbReference type="Gene3D" id="3.30.860.10">
    <property type="entry name" value="30s Ribosomal Protein S19, Chain A"/>
    <property type="match status" value="1"/>
</dbReference>
<dbReference type="HAMAP" id="MF_00531">
    <property type="entry name" value="Ribosomal_uS19"/>
    <property type="match status" value="1"/>
</dbReference>
<dbReference type="InterPro" id="IPR002222">
    <property type="entry name" value="Ribosomal_uS19"/>
</dbReference>
<dbReference type="InterPro" id="IPR005732">
    <property type="entry name" value="Ribosomal_uS19_bac-type"/>
</dbReference>
<dbReference type="InterPro" id="IPR020934">
    <property type="entry name" value="Ribosomal_uS19_CS"/>
</dbReference>
<dbReference type="InterPro" id="IPR023575">
    <property type="entry name" value="Ribosomal_uS19_SF"/>
</dbReference>
<dbReference type="NCBIfam" id="TIGR01050">
    <property type="entry name" value="rpsS_bact"/>
    <property type="match status" value="1"/>
</dbReference>
<dbReference type="PANTHER" id="PTHR11880">
    <property type="entry name" value="RIBOSOMAL PROTEIN S19P FAMILY MEMBER"/>
    <property type="match status" value="1"/>
</dbReference>
<dbReference type="PANTHER" id="PTHR11880:SF8">
    <property type="entry name" value="SMALL RIBOSOMAL SUBUNIT PROTEIN US19M"/>
    <property type="match status" value="1"/>
</dbReference>
<dbReference type="Pfam" id="PF00203">
    <property type="entry name" value="Ribosomal_S19"/>
    <property type="match status" value="1"/>
</dbReference>
<dbReference type="PIRSF" id="PIRSF002144">
    <property type="entry name" value="Ribosomal_S19"/>
    <property type="match status" value="1"/>
</dbReference>
<dbReference type="PRINTS" id="PR00975">
    <property type="entry name" value="RIBOSOMALS19"/>
</dbReference>
<dbReference type="SUPFAM" id="SSF54570">
    <property type="entry name" value="Ribosomal protein S19"/>
    <property type="match status" value="1"/>
</dbReference>
<dbReference type="PROSITE" id="PS00323">
    <property type="entry name" value="RIBOSOMAL_S19"/>
    <property type="match status" value="1"/>
</dbReference>
<keyword id="KW-0687">Ribonucleoprotein</keyword>
<keyword id="KW-0689">Ribosomal protein</keyword>
<keyword id="KW-0694">RNA-binding</keyword>
<keyword id="KW-0699">rRNA-binding</keyword>
<gene>
    <name evidence="1" type="primary">rpsS</name>
    <name type="ordered locus">RPA3246</name>
</gene>
<sequence length="92" mass="10220">MVRSVWKGPFVEASLLKKADAARASGRHDVIKIWSRRSTILPQFVGLTFGVYNGQKHVPVSVNEEMVGHKFGEFSPTRTFHGHAGDKKSKKG</sequence>
<evidence type="ECO:0000255" key="1">
    <source>
        <dbReference type="HAMAP-Rule" id="MF_00531"/>
    </source>
</evidence>
<evidence type="ECO:0000269" key="2">
    <source>
    </source>
</evidence>
<evidence type="ECO:0000305" key="3"/>
<feature type="initiator methionine" description="Removed">
    <location>
        <position position="1"/>
    </location>
</feature>
<feature type="chain" id="PRO_0000129890" description="Small ribosomal subunit protein uS19">
    <location>
        <begin position="2"/>
        <end position="92"/>
    </location>
</feature>
<accession>Q6N4T8</accession>
<proteinExistence type="evidence at protein level"/>
<name>RS19_RHOPA</name>
<comment type="function">
    <text evidence="1">Protein S19 forms a complex with S13 that binds strongly to the 16S ribosomal RNA.</text>
</comment>
<comment type="mass spectrometry" mass="10087.4" method="Electrospray" evidence="2"/>
<comment type="similarity">
    <text evidence="1">Belongs to the universal ribosomal protein uS19 family.</text>
</comment>
<reference key="1">
    <citation type="journal article" date="2004" name="Nat. Biotechnol.">
        <title>Complete genome sequence of the metabolically versatile photosynthetic bacterium Rhodopseudomonas palustris.</title>
        <authorList>
            <person name="Larimer F.W."/>
            <person name="Chain P."/>
            <person name="Hauser L."/>
            <person name="Lamerdin J.E."/>
            <person name="Malfatti S."/>
            <person name="Do L."/>
            <person name="Land M.L."/>
            <person name="Pelletier D.A."/>
            <person name="Beatty J.T."/>
            <person name="Lang A.S."/>
            <person name="Tabita F.R."/>
            <person name="Gibson J.L."/>
            <person name="Hanson T.E."/>
            <person name="Bobst C."/>
            <person name="Torres y Torres J.L."/>
            <person name="Peres C."/>
            <person name="Harrison F.H."/>
            <person name="Gibson J."/>
            <person name="Harwood C.S."/>
        </authorList>
    </citation>
    <scope>NUCLEOTIDE SEQUENCE [LARGE SCALE GENOMIC DNA]</scope>
    <source>
        <strain>ATCC BAA-98 / CGA009</strain>
    </source>
</reference>
<reference key="2">
    <citation type="journal article" date="2004" name="J. Proteome Res.">
        <title>Characterization of the 70S ribosome from Rhodopseudomonas palustris using an integrated 'top-down' and 'bottom-up' mass spectrometric approach.</title>
        <authorList>
            <person name="Strader M.B."/>
            <person name="VerBerkmoes N.C."/>
            <person name="Tabb D.L."/>
            <person name="Connelly H.M."/>
            <person name="Barton J.W."/>
            <person name="Bruce B.D."/>
            <person name="Pelletier D.A."/>
            <person name="Davison B.H."/>
            <person name="Hettich R.L."/>
            <person name="Larimer F.W."/>
            <person name="Hurst G.B."/>
        </authorList>
    </citation>
    <scope>MASS SPECTROMETRY</scope>
    <source>
        <strain>ATCC BAA-98 / CGA009</strain>
    </source>
</reference>